<organism>
    <name type="scientific">Nostoc sp. (strain PCC 7120 / SAG 25.82 / UTEX 2576)</name>
    <dbReference type="NCBI Taxonomy" id="103690"/>
    <lineage>
        <taxon>Bacteria</taxon>
        <taxon>Bacillati</taxon>
        <taxon>Cyanobacteriota</taxon>
        <taxon>Cyanophyceae</taxon>
        <taxon>Nostocales</taxon>
        <taxon>Nostocaceae</taxon>
        <taxon>Nostoc</taxon>
    </lineage>
</organism>
<comment type="function">
    <text evidence="1">Catalyzes the insertion of molybdate into adenylated molybdopterin with the concomitant release of AMP.</text>
</comment>
<comment type="catalytic activity">
    <reaction>
        <text>adenylyl-molybdopterin + molybdate = Mo-molybdopterin + AMP + H(+)</text>
        <dbReference type="Rhea" id="RHEA:35047"/>
        <dbReference type="ChEBI" id="CHEBI:15378"/>
        <dbReference type="ChEBI" id="CHEBI:36264"/>
        <dbReference type="ChEBI" id="CHEBI:62727"/>
        <dbReference type="ChEBI" id="CHEBI:71302"/>
        <dbReference type="ChEBI" id="CHEBI:456215"/>
        <dbReference type="EC" id="2.10.1.1"/>
    </reaction>
</comment>
<comment type="cofactor">
    <cofactor evidence="1">
        <name>Mg(2+)</name>
        <dbReference type="ChEBI" id="CHEBI:18420"/>
    </cofactor>
    <text evidence="1">Binds 1 Mg(2+) ion per subunit.</text>
</comment>
<comment type="pathway">
    <text>Cofactor biosynthesis; molybdopterin biosynthesis.</text>
</comment>
<comment type="similarity">
    <text evidence="3">Belongs to the MoeA family.</text>
</comment>
<gene>
    <name type="primary">moeA</name>
    <name type="ordered locus">all5136</name>
</gene>
<sequence>MQNKLSCEVKRNPHTPKPLHPYTPMPSVRDTANIIFNLVPKLDSQQDTEIVDLWAANGRILATPVNSTLDFPHWDNSAMDGYAVRYEDVHNSNAEQPVSLEVVAEIPAGYQPKFTLQPGQAARIFTGAVMPSGGDTVVMQEKTRQENNRVFILTTPKPGEFVRLKAAYYQAGTQLLPANTQLNAAEIAILAASQCPQVKVYRRPRVAIFSTGDELVTLDQPLQPGQIVDSNQYALAALVKQNGAEPILFGIVKDNPTALGETISKAIANADIVISSGGVSVGDYDYVDQILASLGAKIHIRSVEMRPGKPLTVATFPTPPAPIYLGLPGNPAAVLVTFWRFVQPVIRKLGGLAKGWEPVFVKVRSHDELHSDGKRETYIWGSLHLVDGLYEFHKAGGSHSSGNLINLAQTNALAVLPLGETFISSGKDVLVLQLPI</sequence>
<keyword id="KW-0460">Magnesium</keyword>
<keyword id="KW-0479">Metal-binding</keyword>
<keyword id="KW-0500">Molybdenum</keyword>
<keyword id="KW-0501">Molybdenum cofactor biosynthesis</keyword>
<keyword id="KW-1185">Reference proteome</keyword>
<keyword id="KW-0808">Transferase</keyword>
<proteinExistence type="inferred from homology"/>
<protein>
    <recommendedName>
        <fullName>Molybdopterin molybdenumtransferase</fullName>
        <shortName>MPT Mo-transferase</shortName>
        <ecNumber>2.10.1.1</ecNumber>
    </recommendedName>
</protein>
<reference key="1">
    <citation type="journal article" date="1996" name="J. Bacteriol.">
        <title>Nitrate reductase activity and heterocyst suppression on nitrate in Anabaena sp. strain PCC 7120 require moeA.</title>
        <authorList>
            <person name="Ramaswamy K.S."/>
            <person name="Endley S."/>
            <person name="Golden J.W."/>
        </authorList>
    </citation>
    <scope>NUCLEOTIDE SEQUENCE [GENOMIC DNA]</scope>
</reference>
<reference key="2">
    <citation type="journal article" date="2001" name="DNA Res.">
        <title>Complete genomic sequence of the filamentous nitrogen-fixing cyanobacterium Anabaena sp. strain PCC 7120.</title>
        <authorList>
            <person name="Kaneko T."/>
            <person name="Nakamura Y."/>
            <person name="Wolk C.P."/>
            <person name="Kuritz T."/>
            <person name="Sasamoto S."/>
            <person name="Watanabe A."/>
            <person name="Iriguchi M."/>
            <person name="Ishikawa A."/>
            <person name="Kawashima K."/>
            <person name="Kimura T."/>
            <person name="Kishida Y."/>
            <person name="Kohara M."/>
            <person name="Matsumoto M."/>
            <person name="Matsuno A."/>
            <person name="Muraki A."/>
            <person name="Nakazaki N."/>
            <person name="Shimpo S."/>
            <person name="Sugimoto M."/>
            <person name="Takazawa M."/>
            <person name="Yamada M."/>
            <person name="Yasuda M."/>
            <person name="Tabata S."/>
        </authorList>
    </citation>
    <scope>NUCLEOTIDE SEQUENCE [LARGE SCALE GENOMIC DNA]</scope>
    <source>
        <strain>PCC 7120 / SAG 25.82 / UTEX 2576</strain>
    </source>
</reference>
<name>MOEA_NOSS1</name>
<accession>Q44243</accession>
<feature type="chain" id="PRO_0000170988" description="Molybdopterin molybdenumtransferase">
    <location>
        <begin position="1"/>
        <end position="436"/>
    </location>
</feature>
<feature type="region of interest" description="Disordered" evidence="2">
    <location>
        <begin position="1"/>
        <end position="24"/>
    </location>
</feature>
<feature type="compositionally biased region" description="Pro residues" evidence="2">
    <location>
        <begin position="15"/>
        <end position="24"/>
    </location>
</feature>
<evidence type="ECO:0000250" key="1"/>
<evidence type="ECO:0000256" key="2">
    <source>
        <dbReference type="SAM" id="MobiDB-lite"/>
    </source>
</evidence>
<evidence type="ECO:0000305" key="3"/>
<dbReference type="EC" id="2.10.1.1"/>
<dbReference type="EMBL" id="U34309">
    <property type="protein sequence ID" value="AAC44505.1"/>
    <property type="molecule type" value="Genomic_DNA"/>
</dbReference>
<dbReference type="EMBL" id="BA000019">
    <property type="protein sequence ID" value="BAB76835.1"/>
    <property type="molecule type" value="Genomic_DNA"/>
</dbReference>
<dbReference type="PIR" id="AH2447">
    <property type="entry name" value="AH2447"/>
</dbReference>
<dbReference type="SMR" id="Q44243"/>
<dbReference type="STRING" id="103690.gene:10497195"/>
<dbReference type="KEGG" id="ana:all5136"/>
<dbReference type="eggNOG" id="COG0303">
    <property type="taxonomic scope" value="Bacteria"/>
</dbReference>
<dbReference type="UniPathway" id="UPA00344"/>
<dbReference type="Proteomes" id="UP000002483">
    <property type="component" value="Chromosome"/>
</dbReference>
<dbReference type="GO" id="GO:0005829">
    <property type="term" value="C:cytosol"/>
    <property type="evidence" value="ECO:0007669"/>
    <property type="project" value="TreeGrafter"/>
</dbReference>
<dbReference type="GO" id="GO:0046872">
    <property type="term" value="F:metal ion binding"/>
    <property type="evidence" value="ECO:0007669"/>
    <property type="project" value="UniProtKB-KW"/>
</dbReference>
<dbReference type="GO" id="GO:0061599">
    <property type="term" value="F:molybdopterin molybdotransferase activity"/>
    <property type="evidence" value="ECO:0007669"/>
    <property type="project" value="UniProtKB-EC"/>
</dbReference>
<dbReference type="GO" id="GO:0006777">
    <property type="term" value="P:Mo-molybdopterin cofactor biosynthetic process"/>
    <property type="evidence" value="ECO:0007669"/>
    <property type="project" value="UniProtKB-KW"/>
</dbReference>
<dbReference type="CDD" id="cd00887">
    <property type="entry name" value="MoeA"/>
    <property type="match status" value="1"/>
</dbReference>
<dbReference type="FunFam" id="2.170.190.11:FF:000001">
    <property type="entry name" value="Molybdopterin molybdenumtransferase"/>
    <property type="match status" value="1"/>
</dbReference>
<dbReference type="FunFam" id="3.40.980.10:FF:000004">
    <property type="entry name" value="Molybdopterin molybdenumtransferase"/>
    <property type="match status" value="1"/>
</dbReference>
<dbReference type="Gene3D" id="3.40.980.10">
    <property type="entry name" value="MoaB/Mog-like domain"/>
    <property type="match status" value="1"/>
</dbReference>
<dbReference type="Gene3D" id="2.40.340.10">
    <property type="entry name" value="MoeA, C-terminal, domain IV"/>
    <property type="match status" value="1"/>
</dbReference>
<dbReference type="Gene3D" id="3.90.105.10">
    <property type="entry name" value="Molybdopterin biosynthesis moea protein, domain 2"/>
    <property type="match status" value="1"/>
</dbReference>
<dbReference type="Gene3D" id="2.170.190.11">
    <property type="entry name" value="Molybdopterin biosynthesis moea protein, domain 3"/>
    <property type="match status" value="1"/>
</dbReference>
<dbReference type="InterPro" id="IPR036425">
    <property type="entry name" value="MoaB/Mog-like_dom_sf"/>
</dbReference>
<dbReference type="InterPro" id="IPR001453">
    <property type="entry name" value="MoaB/Mog_dom"/>
</dbReference>
<dbReference type="InterPro" id="IPR008284">
    <property type="entry name" value="MoCF_biosynth_CS"/>
</dbReference>
<dbReference type="InterPro" id="IPR038987">
    <property type="entry name" value="MoeA-like"/>
</dbReference>
<dbReference type="InterPro" id="IPR005111">
    <property type="entry name" value="MoeA_C_domain_IV"/>
</dbReference>
<dbReference type="InterPro" id="IPR036688">
    <property type="entry name" value="MoeA_C_domain_IV_sf"/>
</dbReference>
<dbReference type="InterPro" id="IPR005110">
    <property type="entry name" value="MoeA_linker/N"/>
</dbReference>
<dbReference type="InterPro" id="IPR036135">
    <property type="entry name" value="MoeA_linker/N_sf"/>
</dbReference>
<dbReference type="NCBIfam" id="NF045515">
    <property type="entry name" value="Glp_gephyrin"/>
    <property type="match status" value="1"/>
</dbReference>
<dbReference type="NCBIfam" id="TIGR00177">
    <property type="entry name" value="molyb_syn"/>
    <property type="match status" value="1"/>
</dbReference>
<dbReference type="PANTHER" id="PTHR10192:SF5">
    <property type="entry name" value="GEPHYRIN"/>
    <property type="match status" value="1"/>
</dbReference>
<dbReference type="PANTHER" id="PTHR10192">
    <property type="entry name" value="MOLYBDOPTERIN BIOSYNTHESIS PROTEIN"/>
    <property type="match status" value="1"/>
</dbReference>
<dbReference type="Pfam" id="PF00994">
    <property type="entry name" value="MoCF_biosynth"/>
    <property type="match status" value="1"/>
</dbReference>
<dbReference type="Pfam" id="PF03454">
    <property type="entry name" value="MoeA_C"/>
    <property type="match status" value="1"/>
</dbReference>
<dbReference type="Pfam" id="PF03453">
    <property type="entry name" value="MoeA_N"/>
    <property type="match status" value="1"/>
</dbReference>
<dbReference type="SMART" id="SM00852">
    <property type="entry name" value="MoCF_biosynth"/>
    <property type="match status" value="1"/>
</dbReference>
<dbReference type="SUPFAM" id="SSF63867">
    <property type="entry name" value="MoeA C-terminal domain-like"/>
    <property type="match status" value="1"/>
</dbReference>
<dbReference type="SUPFAM" id="SSF63882">
    <property type="entry name" value="MoeA N-terminal region -like"/>
    <property type="match status" value="1"/>
</dbReference>
<dbReference type="SUPFAM" id="SSF53218">
    <property type="entry name" value="Molybdenum cofactor biosynthesis proteins"/>
    <property type="match status" value="1"/>
</dbReference>
<dbReference type="PROSITE" id="PS01079">
    <property type="entry name" value="MOCF_BIOSYNTHESIS_2"/>
    <property type="match status" value="1"/>
</dbReference>